<protein>
    <recommendedName>
        <fullName>Glutaredoxin-C13</fullName>
        <shortName>AtGrxC13</shortName>
    </recommendedName>
    <alternativeName>
        <fullName>Protein ROXY 9</fullName>
    </alternativeName>
</protein>
<reference key="1">
    <citation type="journal article" date="2009" name="Plant Cell">
        <title>Nuclear activity of ROXY1, a glutaredoxin interacting with TGA factors, is required for petal development in Arabidopsis thaliana.</title>
        <authorList>
            <person name="Li S."/>
            <person name="Lauri A."/>
            <person name="Ziemann M."/>
            <person name="Busch A."/>
            <person name="Bhave M."/>
            <person name="Zachgo S."/>
        </authorList>
    </citation>
    <scope>NUCLEOTIDE SEQUENCE [MRNA]</scope>
    <scope>GENE FAMILY</scope>
</reference>
<reference key="2">
    <citation type="journal article" date="1999" name="Nature">
        <title>Sequence and analysis of chromosome 2 of the plant Arabidopsis thaliana.</title>
        <authorList>
            <person name="Lin X."/>
            <person name="Kaul S."/>
            <person name="Rounsley S.D."/>
            <person name="Shea T.P."/>
            <person name="Benito M.-I."/>
            <person name="Town C.D."/>
            <person name="Fujii C.Y."/>
            <person name="Mason T.M."/>
            <person name="Bowman C.L."/>
            <person name="Barnstead M.E."/>
            <person name="Feldblyum T.V."/>
            <person name="Buell C.R."/>
            <person name="Ketchum K.A."/>
            <person name="Lee J.J."/>
            <person name="Ronning C.M."/>
            <person name="Koo H.L."/>
            <person name="Moffat K.S."/>
            <person name="Cronin L.A."/>
            <person name="Shen M."/>
            <person name="Pai G."/>
            <person name="Van Aken S."/>
            <person name="Umayam L."/>
            <person name="Tallon L.J."/>
            <person name="Gill J.E."/>
            <person name="Adams M.D."/>
            <person name="Carrera A.J."/>
            <person name="Creasy T.H."/>
            <person name="Goodman H.M."/>
            <person name="Somerville C.R."/>
            <person name="Copenhaver G.P."/>
            <person name="Preuss D."/>
            <person name="Nierman W.C."/>
            <person name="White O."/>
            <person name="Eisen J.A."/>
            <person name="Salzberg S.L."/>
            <person name="Fraser C.M."/>
            <person name="Venter J.C."/>
        </authorList>
    </citation>
    <scope>NUCLEOTIDE SEQUENCE [LARGE SCALE GENOMIC DNA]</scope>
    <source>
        <strain>cv. Columbia</strain>
    </source>
</reference>
<reference key="3">
    <citation type="journal article" date="2017" name="Plant J.">
        <title>Araport11: a complete reannotation of the Arabidopsis thaliana reference genome.</title>
        <authorList>
            <person name="Cheng C.Y."/>
            <person name="Krishnakumar V."/>
            <person name="Chan A.P."/>
            <person name="Thibaud-Nissen F."/>
            <person name="Schobel S."/>
            <person name="Town C.D."/>
        </authorList>
    </citation>
    <scope>GENOME REANNOTATION</scope>
    <source>
        <strain>cv. Columbia</strain>
    </source>
</reference>
<reference key="4">
    <citation type="submission" date="2005-03" db="EMBL/GenBank/DDBJ databases">
        <title>Large-scale analysis of RIKEN Arabidopsis full-length (RAFL) cDNAs.</title>
        <authorList>
            <person name="Totoki Y."/>
            <person name="Seki M."/>
            <person name="Ishida J."/>
            <person name="Nakajima M."/>
            <person name="Enju A."/>
            <person name="Kamiya A."/>
            <person name="Narusaka M."/>
            <person name="Shin-i T."/>
            <person name="Nakagawa M."/>
            <person name="Sakamoto N."/>
            <person name="Oishi K."/>
            <person name="Kohara Y."/>
            <person name="Kobayashi M."/>
            <person name="Toyoda A."/>
            <person name="Sakaki Y."/>
            <person name="Sakurai T."/>
            <person name="Iida K."/>
            <person name="Akiyama K."/>
            <person name="Satou M."/>
            <person name="Toyoda T."/>
            <person name="Konagaya A."/>
            <person name="Carninci P."/>
            <person name="Kawai J."/>
            <person name="Hayashizaki Y."/>
            <person name="Shinozaki K."/>
        </authorList>
    </citation>
    <scope>NUCLEOTIDE SEQUENCE [LARGE SCALE MRNA]</scope>
    <source>
        <strain>cv. Columbia</strain>
    </source>
</reference>
<reference key="5">
    <citation type="submission" date="2006-04" db="EMBL/GenBank/DDBJ databases">
        <title>Arabidopsis ORF clones.</title>
        <authorList>
            <person name="Shinn P."/>
            <person name="Chen H."/>
            <person name="Kim C.J."/>
            <person name="Ecker J.R."/>
        </authorList>
    </citation>
    <scope>NUCLEOTIDE SEQUENCE [LARGE SCALE MRNA]</scope>
    <source>
        <strain>cv. Columbia</strain>
    </source>
</reference>
<reference key="6">
    <citation type="submission" date="2002-03" db="EMBL/GenBank/DDBJ databases">
        <title>Full-length cDNA from Arabidopsis thaliana.</title>
        <authorList>
            <person name="Brover V.V."/>
            <person name="Troukhan M.E."/>
            <person name="Alexandrov N.A."/>
            <person name="Lu Y.-P."/>
            <person name="Flavell R.B."/>
            <person name="Feldmann K.A."/>
        </authorList>
    </citation>
    <scope>NUCLEOTIDE SEQUENCE [LARGE SCALE MRNA]</scope>
</reference>
<reference key="7">
    <citation type="journal article" date="2004" name="Cell. Mol. Life Sci.">
        <title>Plant glutaredoxins: still mysterious reducing systems.</title>
        <authorList>
            <person name="Rouhier N."/>
            <person name="Gelhaye E."/>
            <person name="Jacquot J.-P."/>
        </authorList>
    </citation>
    <scope>GENE FAMILY</scope>
    <scope>NOMENCLATURE</scope>
</reference>
<reference key="8">
    <citation type="journal article" date="2006" name="J. Exp. Bot.">
        <title>Genome-wide analysis of plant glutaredoxin systems.</title>
        <authorList>
            <person name="Rouhier N."/>
            <person name="Couturier J."/>
            <person name="Jacquot J.-P."/>
        </authorList>
    </citation>
    <scope>GENE FAMILY</scope>
</reference>
<gene>
    <name type="primary">GRXC13</name>
    <name type="synonym">ROXY9</name>
    <name type="ordered locus">At2g47880</name>
    <name type="ORF">F17A22.27</name>
    <name type="ORF">T9J23.13</name>
</gene>
<feature type="chain" id="PRO_0000268720" description="Glutaredoxin-C13">
    <location>
        <begin position="1"/>
        <end position="102"/>
    </location>
</feature>
<feature type="domain" description="Glutaredoxin" evidence="2">
    <location>
        <begin position="1"/>
        <end position="101"/>
    </location>
</feature>
<feature type="disulfide bond" description="Redox-active" evidence="1">
    <location>
        <begin position="21"/>
        <end position="24"/>
    </location>
</feature>
<proteinExistence type="evidence at protein level"/>
<organism>
    <name type="scientific">Arabidopsis thaliana</name>
    <name type="common">Mouse-ear cress</name>
    <dbReference type="NCBI Taxonomy" id="3702"/>
    <lineage>
        <taxon>Eukaryota</taxon>
        <taxon>Viridiplantae</taxon>
        <taxon>Streptophyta</taxon>
        <taxon>Embryophyta</taxon>
        <taxon>Tracheophyta</taxon>
        <taxon>Spermatophyta</taxon>
        <taxon>Magnoliopsida</taxon>
        <taxon>eudicotyledons</taxon>
        <taxon>Gunneridae</taxon>
        <taxon>Pentapetalae</taxon>
        <taxon>rosids</taxon>
        <taxon>malvids</taxon>
        <taxon>Brassicales</taxon>
        <taxon>Brassicaceae</taxon>
        <taxon>Camelineae</taxon>
        <taxon>Arabidopsis</taxon>
    </lineage>
</organism>
<sequence length="102" mass="11275">MDKVMRMSSEKGVVIFTKSSCCLCYAVQILFRDLRVQPTIHEIDNDPDCREIEKALLRLGCSTAVPAVFVGGKLVGSTNEVMSLHLSGSLVPLIKPYQSILY</sequence>
<keyword id="KW-0963">Cytoplasm</keyword>
<keyword id="KW-1015">Disulfide bond</keyword>
<keyword id="KW-0249">Electron transport</keyword>
<keyword id="KW-0676">Redox-active center</keyword>
<keyword id="KW-1185">Reference proteome</keyword>
<keyword id="KW-0813">Transport</keyword>
<accession>O82255</accession>
<accession>C1JGQ0</accession>
<comment type="function">
    <text evidence="1">Has a glutathione-disulfide oxidoreductase activity in the presence of NADPH and glutathione reductase. Reduces low molecular weight disulfides and proteins (By similarity).</text>
</comment>
<comment type="interaction">
    <interactant intactId="EBI-4444060">
        <id>O82255</id>
    </interactant>
    <interactant intactId="EBI-697501">
        <id>Q9FVU9</id>
        <label>CSN5B</label>
    </interactant>
    <organismsDiffer>false</organismsDiffer>
    <experiments>3</experiments>
</comment>
<comment type="interaction">
    <interactant intactId="EBI-4444060">
        <id>O82255</id>
    </interactant>
    <interactant intactId="EBI-541351">
        <id>Q39237</id>
        <label>TGA1</label>
    </interactant>
    <organismsDiffer>false</organismsDiffer>
    <experiments>3</experiments>
</comment>
<comment type="interaction">
    <interactant intactId="EBI-4444060">
        <id>O82255</id>
    </interactant>
    <interactant intactId="EBI-4426557">
        <id>Q84MB2</id>
        <label>TIFY8</label>
    </interactant>
    <organismsDiffer>false</organismsDiffer>
    <experiments>3</experiments>
</comment>
<comment type="subcellular location">
    <subcellularLocation>
        <location evidence="1">Cytoplasm</location>
    </subcellularLocation>
</comment>
<comment type="similarity">
    <text evidence="3">Belongs to the glutaredoxin family. CC-type subfamily.</text>
</comment>
<name>GRC13_ARATH</name>
<dbReference type="EMBL" id="FJ611909">
    <property type="protein sequence ID" value="ACO50414.1"/>
    <property type="molecule type" value="mRNA"/>
</dbReference>
<dbReference type="EMBL" id="AC005309">
    <property type="protein sequence ID" value="AAC63642.1"/>
    <property type="molecule type" value="Genomic_DNA"/>
</dbReference>
<dbReference type="EMBL" id="AC006072">
    <property type="protein sequence ID" value="AAM15127.1"/>
    <property type="molecule type" value="Genomic_DNA"/>
</dbReference>
<dbReference type="EMBL" id="CP002685">
    <property type="protein sequence ID" value="AEC10904.1"/>
    <property type="molecule type" value="Genomic_DNA"/>
</dbReference>
<dbReference type="EMBL" id="AK221443">
    <property type="protein sequence ID" value="BAD94488.1"/>
    <property type="molecule type" value="mRNA"/>
</dbReference>
<dbReference type="EMBL" id="BT025025">
    <property type="protein sequence ID" value="ABE02400.1"/>
    <property type="molecule type" value="mRNA"/>
</dbReference>
<dbReference type="EMBL" id="AY086073">
    <property type="protein sequence ID" value="AAM63279.1"/>
    <property type="molecule type" value="mRNA"/>
</dbReference>
<dbReference type="PIR" id="F84920">
    <property type="entry name" value="F84920"/>
</dbReference>
<dbReference type="RefSeq" id="NP_182309.1">
    <property type="nucleotide sequence ID" value="NM_130355.5"/>
</dbReference>
<dbReference type="SMR" id="O82255"/>
<dbReference type="BioGRID" id="4735">
    <property type="interactions" value="4"/>
</dbReference>
<dbReference type="FunCoup" id="O82255">
    <property type="interactions" value="32"/>
</dbReference>
<dbReference type="IntAct" id="O82255">
    <property type="interactions" value="4"/>
</dbReference>
<dbReference type="STRING" id="3702.O82255"/>
<dbReference type="PaxDb" id="3702-AT2G47880.1"/>
<dbReference type="ProteomicsDB" id="220656"/>
<dbReference type="EnsemblPlants" id="AT2G47880.1">
    <property type="protein sequence ID" value="AT2G47880.1"/>
    <property type="gene ID" value="AT2G47880"/>
</dbReference>
<dbReference type="GeneID" id="819400"/>
<dbReference type="Gramene" id="AT2G47880.1">
    <property type="protein sequence ID" value="AT2G47880.1"/>
    <property type="gene ID" value="AT2G47880"/>
</dbReference>
<dbReference type="KEGG" id="ath:AT2G47880"/>
<dbReference type="Araport" id="AT2G47880"/>
<dbReference type="TAIR" id="AT2G47880">
    <property type="gene designation" value="CEPD2"/>
</dbReference>
<dbReference type="eggNOG" id="KOG1752">
    <property type="taxonomic scope" value="Eukaryota"/>
</dbReference>
<dbReference type="HOGENOM" id="CLU_026126_6_0_1"/>
<dbReference type="InParanoid" id="O82255"/>
<dbReference type="OMA" id="DHDPDGK"/>
<dbReference type="OrthoDB" id="418495at2759"/>
<dbReference type="PhylomeDB" id="O82255"/>
<dbReference type="PRO" id="PR:O82255"/>
<dbReference type="Proteomes" id="UP000006548">
    <property type="component" value="Chromosome 2"/>
</dbReference>
<dbReference type="ExpressionAtlas" id="O82255">
    <property type="expression patterns" value="baseline and differential"/>
</dbReference>
<dbReference type="GO" id="GO:0005737">
    <property type="term" value="C:cytoplasm"/>
    <property type="evidence" value="ECO:0000314"/>
    <property type="project" value="TAIR"/>
</dbReference>
<dbReference type="GO" id="GO:0005634">
    <property type="term" value="C:nucleus"/>
    <property type="evidence" value="ECO:0000314"/>
    <property type="project" value="TAIR"/>
</dbReference>
<dbReference type="GO" id="GO:0006995">
    <property type="term" value="P:cellular response to nitrogen starvation"/>
    <property type="evidence" value="ECO:0000316"/>
    <property type="project" value="TAIR"/>
</dbReference>
<dbReference type="CDD" id="cd03419">
    <property type="entry name" value="GRX_GRXh_1_2_like"/>
    <property type="match status" value="1"/>
</dbReference>
<dbReference type="FunFam" id="3.40.30.10:FF:000028">
    <property type="entry name" value="Glutaredoxin family protein"/>
    <property type="match status" value="1"/>
</dbReference>
<dbReference type="Gene3D" id="3.40.30.10">
    <property type="entry name" value="Glutaredoxin"/>
    <property type="match status" value="1"/>
</dbReference>
<dbReference type="InterPro" id="IPR011905">
    <property type="entry name" value="GlrX-like_pln_2"/>
</dbReference>
<dbReference type="InterPro" id="IPR002109">
    <property type="entry name" value="Glutaredoxin"/>
</dbReference>
<dbReference type="InterPro" id="IPR014025">
    <property type="entry name" value="Glutaredoxin_subgr"/>
</dbReference>
<dbReference type="InterPro" id="IPR036249">
    <property type="entry name" value="Thioredoxin-like_sf"/>
</dbReference>
<dbReference type="NCBIfam" id="TIGR02189">
    <property type="entry name" value="GlrX-like_plant"/>
    <property type="match status" value="1"/>
</dbReference>
<dbReference type="PANTHER" id="PTHR10168">
    <property type="entry name" value="GLUTAREDOXIN"/>
    <property type="match status" value="1"/>
</dbReference>
<dbReference type="Pfam" id="PF00462">
    <property type="entry name" value="Glutaredoxin"/>
    <property type="match status" value="1"/>
</dbReference>
<dbReference type="PRINTS" id="PR00160">
    <property type="entry name" value="GLUTAREDOXIN"/>
</dbReference>
<dbReference type="SUPFAM" id="SSF52833">
    <property type="entry name" value="Thioredoxin-like"/>
    <property type="match status" value="1"/>
</dbReference>
<dbReference type="PROSITE" id="PS51354">
    <property type="entry name" value="GLUTAREDOXIN_2"/>
    <property type="match status" value="1"/>
</dbReference>
<evidence type="ECO:0000250" key="1"/>
<evidence type="ECO:0000255" key="2">
    <source>
        <dbReference type="PROSITE-ProRule" id="PRU00686"/>
    </source>
</evidence>
<evidence type="ECO:0000305" key="3"/>